<gene>
    <name evidence="1" type="primary">azoR</name>
    <name type="ordered locus">Krad_0234</name>
</gene>
<comment type="function">
    <text evidence="1">Quinone reductase that provides resistance to thiol-specific stress caused by electrophilic quinones.</text>
</comment>
<comment type="function">
    <text evidence="1">Also exhibits azoreductase activity. Catalyzes the reductive cleavage of the azo bond in aromatic azo compounds to the corresponding amines.</text>
</comment>
<comment type="catalytic activity">
    <reaction evidence="1">
        <text>2 a quinone + NADH + H(+) = 2 a 1,4-benzosemiquinone + NAD(+)</text>
        <dbReference type="Rhea" id="RHEA:65952"/>
        <dbReference type="ChEBI" id="CHEBI:15378"/>
        <dbReference type="ChEBI" id="CHEBI:57540"/>
        <dbReference type="ChEBI" id="CHEBI:57945"/>
        <dbReference type="ChEBI" id="CHEBI:132124"/>
        <dbReference type="ChEBI" id="CHEBI:134225"/>
    </reaction>
</comment>
<comment type="catalytic activity">
    <reaction evidence="1">
        <text>N,N-dimethyl-1,4-phenylenediamine + anthranilate + 2 NAD(+) = 2-(4-dimethylaminophenyl)diazenylbenzoate + 2 NADH + 2 H(+)</text>
        <dbReference type="Rhea" id="RHEA:55872"/>
        <dbReference type="ChEBI" id="CHEBI:15378"/>
        <dbReference type="ChEBI" id="CHEBI:15783"/>
        <dbReference type="ChEBI" id="CHEBI:16567"/>
        <dbReference type="ChEBI" id="CHEBI:57540"/>
        <dbReference type="ChEBI" id="CHEBI:57945"/>
        <dbReference type="ChEBI" id="CHEBI:71579"/>
        <dbReference type="EC" id="1.7.1.17"/>
    </reaction>
</comment>
<comment type="cofactor">
    <cofactor evidence="1">
        <name>FMN</name>
        <dbReference type="ChEBI" id="CHEBI:58210"/>
    </cofactor>
    <text evidence="1">Binds 1 FMN per subunit.</text>
</comment>
<comment type="subunit">
    <text evidence="1">Homodimer.</text>
</comment>
<comment type="similarity">
    <text evidence="1">Belongs to the azoreductase type 1 family.</text>
</comment>
<dbReference type="EC" id="1.6.5.-" evidence="1"/>
<dbReference type="EC" id="1.7.1.17" evidence="1"/>
<dbReference type="EMBL" id="CP000750">
    <property type="protein sequence ID" value="ABS01724.1"/>
    <property type="molecule type" value="Genomic_DNA"/>
</dbReference>
<dbReference type="RefSeq" id="WP_012085453.1">
    <property type="nucleotide sequence ID" value="NC_009664.2"/>
</dbReference>
<dbReference type="SMR" id="A6W4I5"/>
<dbReference type="STRING" id="266940.Krad_0234"/>
<dbReference type="KEGG" id="kra:Krad_0234"/>
<dbReference type="eggNOG" id="COG1182">
    <property type="taxonomic scope" value="Bacteria"/>
</dbReference>
<dbReference type="HOGENOM" id="CLU_088964_0_1_11"/>
<dbReference type="OrthoDB" id="9805013at2"/>
<dbReference type="Proteomes" id="UP000001116">
    <property type="component" value="Chromosome"/>
</dbReference>
<dbReference type="GO" id="GO:0009055">
    <property type="term" value="F:electron transfer activity"/>
    <property type="evidence" value="ECO:0007669"/>
    <property type="project" value="UniProtKB-UniRule"/>
</dbReference>
<dbReference type="GO" id="GO:0010181">
    <property type="term" value="F:FMN binding"/>
    <property type="evidence" value="ECO:0007669"/>
    <property type="project" value="UniProtKB-UniRule"/>
</dbReference>
<dbReference type="GO" id="GO:0016652">
    <property type="term" value="F:oxidoreductase activity, acting on NAD(P)H as acceptor"/>
    <property type="evidence" value="ECO:0007669"/>
    <property type="project" value="UniProtKB-UniRule"/>
</dbReference>
<dbReference type="GO" id="GO:0016655">
    <property type="term" value="F:oxidoreductase activity, acting on NAD(P)H, quinone or similar compound as acceptor"/>
    <property type="evidence" value="ECO:0007669"/>
    <property type="project" value="InterPro"/>
</dbReference>
<dbReference type="Gene3D" id="3.40.50.360">
    <property type="match status" value="1"/>
</dbReference>
<dbReference type="HAMAP" id="MF_01216">
    <property type="entry name" value="Azoreductase_type1"/>
    <property type="match status" value="1"/>
</dbReference>
<dbReference type="InterPro" id="IPR003680">
    <property type="entry name" value="Flavodoxin_fold"/>
</dbReference>
<dbReference type="InterPro" id="IPR029039">
    <property type="entry name" value="Flavoprotein-like_sf"/>
</dbReference>
<dbReference type="InterPro" id="IPR050104">
    <property type="entry name" value="FMN-dep_NADH:Q_OxRdtase_AzoR1"/>
</dbReference>
<dbReference type="InterPro" id="IPR023048">
    <property type="entry name" value="NADH:quinone_OxRdtase_FMN_depd"/>
</dbReference>
<dbReference type="PANTHER" id="PTHR43741">
    <property type="entry name" value="FMN-DEPENDENT NADH-AZOREDUCTASE 1"/>
    <property type="match status" value="1"/>
</dbReference>
<dbReference type="PANTHER" id="PTHR43741:SF4">
    <property type="entry name" value="FMN-DEPENDENT NADH:QUINONE OXIDOREDUCTASE"/>
    <property type="match status" value="1"/>
</dbReference>
<dbReference type="Pfam" id="PF02525">
    <property type="entry name" value="Flavodoxin_2"/>
    <property type="match status" value="1"/>
</dbReference>
<dbReference type="SUPFAM" id="SSF52218">
    <property type="entry name" value="Flavoproteins"/>
    <property type="match status" value="1"/>
</dbReference>
<proteinExistence type="inferred from homology"/>
<organism>
    <name type="scientific">Kineococcus radiotolerans (strain ATCC BAA-149 / DSM 14245 / SRS30216)</name>
    <dbReference type="NCBI Taxonomy" id="266940"/>
    <lineage>
        <taxon>Bacteria</taxon>
        <taxon>Bacillati</taxon>
        <taxon>Actinomycetota</taxon>
        <taxon>Actinomycetes</taxon>
        <taxon>Kineosporiales</taxon>
        <taxon>Kineosporiaceae</taxon>
        <taxon>Kineococcus</taxon>
    </lineage>
</organism>
<protein>
    <recommendedName>
        <fullName evidence="1">FMN-dependent NADH:quinone oxidoreductase</fullName>
        <ecNumber evidence="1">1.6.5.-</ecNumber>
    </recommendedName>
    <alternativeName>
        <fullName evidence="1">Azo-dye reductase</fullName>
    </alternativeName>
    <alternativeName>
        <fullName evidence="1">FMN-dependent NADH-azo compound oxidoreductase</fullName>
    </alternativeName>
    <alternativeName>
        <fullName evidence="1">FMN-dependent NADH-azoreductase</fullName>
        <ecNumber evidence="1">1.7.1.17</ecNumber>
    </alternativeName>
</protein>
<keyword id="KW-0285">Flavoprotein</keyword>
<keyword id="KW-0288">FMN</keyword>
<keyword id="KW-0520">NAD</keyword>
<keyword id="KW-0560">Oxidoreductase</keyword>
<keyword id="KW-1185">Reference proteome</keyword>
<evidence type="ECO:0000255" key="1">
    <source>
        <dbReference type="HAMAP-Rule" id="MF_01216"/>
    </source>
</evidence>
<feature type="chain" id="PRO_1000138978" description="FMN-dependent NADH:quinone oxidoreductase">
    <location>
        <begin position="1"/>
        <end position="210"/>
    </location>
</feature>
<feature type="binding site" evidence="1">
    <location>
        <position position="10"/>
    </location>
    <ligand>
        <name>FMN</name>
        <dbReference type="ChEBI" id="CHEBI:58210"/>
    </ligand>
</feature>
<feature type="binding site" evidence="1">
    <location>
        <begin position="16"/>
        <end position="18"/>
    </location>
    <ligand>
        <name>FMN</name>
        <dbReference type="ChEBI" id="CHEBI:58210"/>
    </ligand>
</feature>
<sequence>MPHLLHLDSSADLATSRSRAVTAAFADTWRARGEEYTVTHRDLHRDPLPHFADAEQHWPAAARRPGANPPAEQDALTATLHAEVLAADVVLVGAPLYNYTVPSTLKVWLDHLHIPGVLAGEGSQPLAGRPAVVVSSRGATYDAGSPTEGWDHGVPVLRIVLGNSLGMDVHVVQTSATLADRLPEMAALKERGAAEFQAALAAARELARTL</sequence>
<accession>A6W4I5</accession>
<reference key="1">
    <citation type="journal article" date="2008" name="PLoS ONE">
        <title>Survival in nuclear waste, extreme resistance, and potential applications gleaned from the genome sequence of Kineococcus radiotolerans SRS30216.</title>
        <authorList>
            <person name="Bagwell C.E."/>
            <person name="Bhat S."/>
            <person name="Hawkins G.M."/>
            <person name="Smith B.W."/>
            <person name="Biswas T."/>
            <person name="Hoover T.R."/>
            <person name="Saunders E."/>
            <person name="Han C.S."/>
            <person name="Tsodikov O.V."/>
            <person name="Shimkets L.J."/>
        </authorList>
    </citation>
    <scope>NUCLEOTIDE SEQUENCE [LARGE SCALE GENOMIC DNA]</scope>
    <source>
        <strain>ATCC BAA-149 / DSM 14245 / SRS30216</strain>
    </source>
</reference>
<name>AZOR_KINRD</name>